<evidence type="ECO:0000255" key="1">
    <source>
        <dbReference type="HAMAP-Rule" id="MF_01708"/>
    </source>
</evidence>
<comment type="function">
    <text evidence="1">Part of the ABC transporter complex LolCDE involved in the translocation of mature outer membrane-directed lipoproteins, from the inner membrane to the periplasmic chaperone, LolA. Responsible for the formation of the LolA-lipoprotein complex in an ATP-dependent manner.</text>
</comment>
<comment type="subunit">
    <text evidence="1">The complex is composed of two ATP-binding proteins (LolD) and two transmembrane proteins (LolC and LolE).</text>
</comment>
<comment type="subcellular location">
    <subcellularLocation>
        <location evidence="1">Cell inner membrane</location>
        <topology evidence="1">Peripheral membrane protein</topology>
    </subcellularLocation>
</comment>
<comment type="similarity">
    <text evidence="1">Belongs to the ABC transporter superfamily. Lipoprotein translocase (TC 3.A.1.125) family.</text>
</comment>
<proteinExistence type="inferred from homology"/>
<gene>
    <name evidence="1" type="primary">lolD</name>
    <name type="ordered locus">HCH_02351</name>
</gene>
<organism>
    <name type="scientific">Hahella chejuensis (strain KCTC 2396)</name>
    <dbReference type="NCBI Taxonomy" id="349521"/>
    <lineage>
        <taxon>Bacteria</taxon>
        <taxon>Pseudomonadati</taxon>
        <taxon>Pseudomonadota</taxon>
        <taxon>Gammaproteobacteria</taxon>
        <taxon>Oceanospirillales</taxon>
        <taxon>Hahellaceae</taxon>
        <taxon>Hahella</taxon>
    </lineage>
</organism>
<name>LOLD_HAHCH</name>
<keyword id="KW-0067">ATP-binding</keyword>
<keyword id="KW-0997">Cell inner membrane</keyword>
<keyword id="KW-1003">Cell membrane</keyword>
<keyword id="KW-0472">Membrane</keyword>
<keyword id="KW-0547">Nucleotide-binding</keyword>
<keyword id="KW-1185">Reference proteome</keyword>
<keyword id="KW-1278">Translocase</keyword>
<keyword id="KW-0813">Transport</keyword>
<sequence>MSSPVLKCQSVHKVYVQGKESIEVLRGVNIALYPEQTVAIVGASGSGKSTLLNIMGALDHPSSGSISISGQDVSDMDEKAKARLRNAHVGFVYQFHHLLPEFSALENVCMPLLLRGVAVKEAKKEAEYWLGRVGLSHRLKHRPGQLSGGERQRVAIARALSPRPSCVLMDEPTGNLDPETAESVQALLWDLVRQNQTSFVLVTHDYRLAARMDEQYSLEEGVLAKVAPNSL</sequence>
<accession>Q2SJK0</accession>
<reference key="1">
    <citation type="journal article" date="2005" name="Nucleic Acids Res.">
        <title>Genomic blueprint of Hahella chejuensis, a marine microbe producing an algicidal agent.</title>
        <authorList>
            <person name="Jeong H."/>
            <person name="Yim J.H."/>
            <person name="Lee C."/>
            <person name="Choi S.-H."/>
            <person name="Park Y.K."/>
            <person name="Yoon S.H."/>
            <person name="Hur C.-G."/>
            <person name="Kang H.-Y."/>
            <person name="Kim D."/>
            <person name="Lee H.H."/>
            <person name="Park K.H."/>
            <person name="Park S.-H."/>
            <person name="Park H.-S."/>
            <person name="Lee H.K."/>
            <person name="Oh T.K."/>
            <person name="Kim J.F."/>
        </authorList>
    </citation>
    <scope>NUCLEOTIDE SEQUENCE [LARGE SCALE GENOMIC DNA]</scope>
    <source>
        <strain>KCTC 2396</strain>
    </source>
</reference>
<dbReference type="EC" id="7.6.2.-" evidence="1"/>
<dbReference type="EMBL" id="CP000155">
    <property type="protein sequence ID" value="ABC29174.1"/>
    <property type="molecule type" value="Genomic_DNA"/>
</dbReference>
<dbReference type="RefSeq" id="WP_011396243.1">
    <property type="nucleotide sequence ID" value="NC_007645.1"/>
</dbReference>
<dbReference type="SMR" id="Q2SJK0"/>
<dbReference type="STRING" id="349521.HCH_02351"/>
<dbReference type="KEGG" id="hch:HCH_02351"/>
<dbReference type="eggNOG" id="COG1136">
    <property type="taxonomic scope" value="Bacteria"/>
</dbReference>
<dbReference type="HOGENOM" id="CLU_000604_1_22_6"/>
<dbReference type="OrthoDB" id="9801477at2"/>
<dbReference type="Proteomes" id="UP000000238">
    <property type="component" value="Chromosome"/>
</dbReference>
<dbReference type="GO" id="GO:0005886">
    <property type="term" value="C:plasma membrane"/>
    <property type="evidence" value="ECO:0007669"/>
    <property type="project" value="UniProtKB-SubCell"/>
</dbReference>
<dbReference type="GO" id="GO:0005524">
    <property type="term" value="F:ATP binding"/>
    <property type="evidence" value="ECO:0007669"/>
    <property type="project" value="UniProtKB-KW"/>
</dbReference>
<dbReference type="GO" id="GO:0016887">
    <property type="term" value="F:ATP hydrolysis activity"/>
    <property type="evidence" value="ECO:0007669"/>
    <property type="project" value="InterPro"/>
</dbReference>
<dbReference type="GO" id="GO:0022857">
    <property type="term" value="F:transmembrane transporter activity"/>
    <property type="evidence" value="ECO:0007669"/>
    <property type="project" value="TreeGrafter"/>
</dbReference>
<dbReference type="GO" id="GO:0044874">
    <property type="term" value="P:lipoprotein localization to outer membrane"/>
    <property type="evidence" value="ECO:0007669"/>
    <property type="project" value="TreeGrafter"/>
</dbReference>
<dbReference type="GO" id="GO:0089705">
    <property type="term" value="P:protein localization to outer membrane"/>
    <property type="evidence" value="ECO:0007669"/>
    <property type="project" value="TreeGrafter"/>
</dbReference>
<dbReference type="CDD" id="cd03255">
    <property type="entry name" value="ABC_MJ0796_LolCDE_FtsE"/>
    <property type="match status" value="1"/>
</dbReference>
<dbReference type="FunFam" id="3.40.50.300:FF:000230">
    <property type="entry name" value="Lipoprotein-releasing system ATP-binding protein LolD"/>
    <property type="match status" value="1"/>
</dbReference>
<dbReference type="Gene3D" id="3.40.50.300">
    <property type="entry name" value="P-loop containing nucleotide triphosphate hydrolases"/>
    <property type="match status" value="1"/>
</dbReference>
<dbReference type="InterPro" id="IPR003593">
    <property type="entry name" value="AAA+_ATPase"/>
</dbReference>
<dbReference type="InterPro" id="IPR003439">
    <property type="entry name" value="ABC_transporter-like_ATP-bd"/>
</dbReference>
<dbReference type="InterPro" id="IPR017871">
    <property type="entry name" value="ABC_transporter-like_CS"/>
</dbReference>
<dbReference type="InterPro" id="IPR015854">
    <property type="entry name" value="ABC_transpr_LolD-like"/>
</dbReference>
<dbReference type="InterPro" id="IPR017911">
    <property type="entry name" value="MacB-like_ATP-bd"/>
</dbReference>
<dbReference type="InterPro" id="IPR027417">
    <property type="entry name" value="P-loop_NTPase"/>
</dbReference>
<dbReference type="PANTHER" id="PTHR24220">
    <property type="entry name" value="IMPORT ATP-BINDING PROTEIN"/>
    <property type="match status" value="1"/>
</dbReference>
<dbReference type="PANTHER" id="PTHR24220:SF689">
    <property type="entry name" value="LIPOPROTEIN-RELEASING SYSTEM ATP-BINDING PROTEIN LOLD"/>
    <property type="match status" value="1"/>
</dbReference>
<dbReference type="Pfam" id="PF00005">
    <property type="entry name" value="ABC_tran"/>
    <property type="match status" value="1"/>
</dbReference>
<dbReference type="SMART" id="SM00382">
    <property type="entry name" value="AAA"/>
    <property type="match status" value="1"/>
</dbReference>
<dbReference type="SUPFAM" id="SSF52540">
    <property type="entry name" value="P-loop containing nucleoside triphosphate hydrolases"/>
    <property type="match status" value="1"/>
</dbReference>
<dbReference type="PROSITE" id="PS00211">
    <property type="entry name" value="ABC_TRANSPORTER_1"/>
    <property type="match status" value="1"/>
</dbReference>
<dbReference type="PROSITE" id="PS50893">
    <property type="entry name" value="ABC_TRANSPORTER_2"/>
    <property type="match status" value="1"/>
</dbReference>
<dbReference type="PROSITE" id="PS51244">
    <property type="entry name" value="LOLD"/>
    <property type="match status" value="1"/>
</dbReference>
<feature type="chain" id="PRO_0000272095" description="Lipoprotein-releasing system ATP-binding protein LolD">
    <location>
        <begin position="1"/>
        <end position="231"/>
    </location>
</feature>
<feature type="domain" description="ABC transporter" evidence="1">
    <location>
        <begin position="6"/>
        <end position="231"/>
    </location>
</feature>
<feature type="binding site" evidence="1">
    <location>
        <begin position="42"/>
        <end position="49"/>
    </location>
    <ligand>
        <name>ATP</name>
        <dbReference type="ChEBI" id="CHEBI:30616"/>
    </ligand>
</feature>
<protein>
    <recommendedName>
        <fullName evidence="1">Lipoprotein-releasing system ATP-binding protein LolD</fullName>
        <ecNumber evidence="1">7.6.2.-</ecNumber>
    </recommendedName>
</protein>